<protein>
    <recommendedName>
        <fullName>ATP-dependent RNA helicase ROK1</fullName>
        <ecNumber>3.6.4.13</ecNumber>
    </recommendedName>
</protein>
<evidence type="ECO:0000250" key="1"/>
<evidence type="ECO:0000255" key="2">
    <source>
        <dbReference type="PROSITE-ProRule" id="PRU00541"/>
    </source>
</evidence>
<evidence type="ECO:0000255" key="3">
    <source>
        <dbReference type="PROSITE-ProRule" id="PRU00542"/>
    </source>
</evidence>
<evidence type="ECO:0000256" key="4">
    <source>
        <dbReference type="SAM" id="MobiDB-lite"/>
    </source>
</evidence>
<evidence type="ECO:0000305" key="5"/>
<accession>Q4IPI1</accession>
<accession>A0A0E0RNS2</accession>
<accession>V6QW04</accession>
<feature type="chain" id="PRO_0000232305" description="ATP-dependent RNA helicase ROK1">
    <location>
        <begin position="1"/>
        <end position="693"/>
    </location>
</feature>
<feature type="domain" description="Helicase ATP-binding" evidence="2">
    <location>
        <begin position="203"/>
        <end position="415"/>
    </location>
</feature>
<feature type="domain" description="Helicase C-terminal" evidence="3">
    <location>
        <begin position="454"/>
        <end position="623"/>
    </location>
</feature>
<feature type="region of interest" description="Disordered" evidence="4">
    <location>
        <begin position="1"/>
        <end position="101"/>
    </location>
</feature>
<feature type="region of interest" description="Disordered" evidence="4">
    <location>
        <begin position="288"/>
        <end position="326"/>
    </location>
</feature>
<feature type="region of interest" description="Disordered" evidence="4">
    <location>
        <begin position="631"/>
        <end position="693"/>
    </location>
</feature>
<feature type="short sequence motif" description="Q motif">
    <location>
        <begin position="159"/>
        <end position="187"/>
    </location>
</feature>
<feature type="short sequence motif" description="DEAD box">
    <location>
        <begin position="362"/>
        <end position="365"/>
    </location>
</feature>
<feature type="compositionally biased region" description="Polar residues" evidence="4">
    <location>
        <begin position="16"/>
        <end position="38"/>
    </location>
</feature>
<feature type="compositionally biased region" description="Basic and acidic residues" evidence="4">
    <location>
        <begin position="53"/>
        <end position="64"/>
    </location>
</feature>
<feature type="compositionally biased region" description="Low complexity" evidence="4">
    <location>
        <begin position="77"/>
        <end position="91"/>
    </location>
</feature>
<feature type="compositionally biased region" description="Acidic residues" evidence="4">
    <location>
        <begin position="294"/>
        <end position="312"/>
    </location>
</feature>
<feature type="compositionally biased region" description="Basic and acidic residues" evidence="4">
    <location>
        <begin position="313"/>
        <end position="323"/>
    </location>
</feature>
<feature type="compositionally biased region" description="Acidic residues" evidence="4">
    <location>
        <begin position="681"/>
        <end position="693"/>
    </location>
</feature>
<feature type="binding site" evidence="2">
    <location>
        <begin position="216"/>
        <end position="223"/>
    </location>
    <ligand>
        <name>ATP</name>
        <dbReference type="ChEBI" id="CHEBI:30616"/>
    </ligand>
</feature>
<keyword id="KW-0067">ATP-binding</keyword>
<keyword id="KW-0347">Helicase</keyword>
<keyword id="KW-0378">Hydrolase</keyword>
<keyword id="KW-0547">Nucleotide-binding</keyword>
<keyword id="KW-0539">Nucleus</keyword>
<keyword id="KW-1185">Reference proteome</keyword>
<keyword id="KW-0690">Ribosome biogenesis</keyword>
<keyword id="KW-0694">RNA-binding</keyword>
<keyword id="KW-0698">rRNA processing</keyword>
<dbReference type="EC" id="3.6.4.13"/>
<dbReference type="EMBL" id="DS231663">
    <property type="protein sequence ID" value="ESU06119.1"/>
    <property type="molecule type" value="Genomic_DNA"/>
</dbReference>
<dbReference type="EMBL" id="HG970332">
    <property type="protein sequence ID" value="CEF72897.1"/>
    <property type="molecule type" value="Genomic_DNA"/>
</dbReference>
<dbReference type="RefSeq" id="XP_011316604.1">
    <property type="nucleotide sequence ID" value="XM_011318302.1"/>
</dbReference>
<dbReference type="SMR" id="Q4IPI1"/>
<dbReference type="FunCoup" id="Q4IPI1">
    <property type="interactions" value="1029"/>
</dbReference>
<dbReference type="STRING" id="229533.Q4IPI1"/>
<dbReference type="GeneID" id="23548345"/>
<dbReference type="KEGG" id="fgr:FGSG_00877"/>
<dbReference type="VEuPathDB" id="FungiDB:FGRAMPH1_01G02193"/>
<dbReference type="eggNOG" id="KOG0344">
    <property type="taxonomic scope" value="Eukaryota"/>
</dbReference>
<dbReference type="HOGENOM" id="CLU_003041_1_4_1"/>
<dbReference type="InParanoid" id="Q4IPI1"/>
<dbReference type="OrthoDB" id="105578at110618"/>
<dbReference type="Proteomes" id="UP000070720">
    <property type="component" value="Chromosome 1"/>
</dbReference>
<dbReference type="GO" id="GO:0005730">
    <property type="term" value="C:nucleolus"/>
    <property type="evidence" value="ECO:0007669"/>
    <property type="project" value="UniProtKB-SubCell"/>
</dbReference>
<dbReference type="GO" id="GO:0005524">
    <property type="term" value="F:ATP binding"/>
    <property type="evidence" value="ECO:0007669"/>
    <property type="project" value="UniProtKB-KW"/>
</dbReference>
<dbReference type="GO" id="GO:0016887">
    <property type="term" value="F:ATP hydrolysis activity"/>
    <property type="evidence" value="ECO:0007669"/>
    <property type="project" value="RHEA"/>
</dbReference>
<dbReference type="GO" id="GO:0003723">
    <property type="term" value="F:RNA binding"/>
    <property type="evidence" value="ECO:0007669"/>
    <property type="project" value="UniProtKB-KW"/>
</dbReference>
<dbReference type="GO" id="GO:0003724">
    <property type="term" value="F:RNA helicase activity"/>
    <property type="evidence" value="ECO:0007669"/>
    <property type="project" value="UniProtKB-EC"/>
</dbReference>
<dbReference type="GO" id="GO:0030490">
    <property type="term" value="P:maturation of SSU-rRNA"/>
    <property type="evidence" value="ECO:0007669"/>
    <property type="project" value="InterPro"/>
</dbReference>
<dbReference type="CDD" id="cd17957">
    <property type="entry name" value="DEADc_DDX52"/>
    <property type="match status" value="1"/>
</dbReference>
<dbReference type="CDD" id="cd18787">
    <property type="entry name" value="SF2_C_DEAD"/>
    <property type="match status" value="1"/>
</dbReference>
<dbReference type="Gene3D" id="3.40.50.300">
    <property type="entry name" value="P-loop containing nucleotide triphosphate hydrolases"/>
    <property type="match status" value="2"/>
</dbReference>
<dbReference type="InterPro" id="IPR044764">
    <property type="entry name" value="DDX52/Rok1_DEADc"/>
</dbReference>
<dbReference type="InterPro" id="IPR011545">
    <property type="entry name" value="DEAD/DEAH_box_helicase_dom"/>
</dbReference>
<dbReference type="InterPro" id="IPR014001">
    <property type="entry name" value="Helicase_ATP-bd"/>
</dbReference>
<dbReference type="InterPro" id="IPR001650">
    <property type="entry name" value="Helicase_C-like"/>
</dbReference>
<dbReference type="InterPro" id="IPR027417">
    <property type="entry name" value="P-loop_NTPase"/>
</dbReference>
<dbReference type="PANTHER" id="PTHR24031">
    <property type="entry name" value="RNA HELICASE"/>
    <property type="match status" value="1"/>
</dbReference>
<dbReference type="Pfam" id="PF00270">
    <property type="entry name" value="DEAD"/>
    <property type="match status" value="1"/>
</dbReference>
<dbReference type="Pfam" id="PF00271">
    <property type="entry name" value="Helicase_C"/>
    <property type="match status" value="1"/>
</dbReference>
<dbReference type="SMART" id="SM00487">
    <property type="entry name" value="DEXDc"/>
    <property type="match status" value="1"/>
</dbReference>
<dbReference type="SMART" id="SM00490">
    <property type="entry name" value="HELICc"/>
    <property type="match status" value="1"/>
</dbReference>
<dbReference type="SUPFAM" id="SSF52540">
    <property type="entry name" value="P-loop containing nucleoside triphosphate hydrolases"/>
    <property type="match status" value="2"/>
</dbReference>
<dbReference type="PROSITE" id="PS51192">
    <property type="entry name" value="HELICASE_ATP_BIND_1"/>
    <property type="match status" value="1"/>
</dbReference>
<dbReference type="PROSITE" id="PS51194">
    <property type="entry name" value="HELICASE_CTER"/>
    <property type="match status" value="1"/>
</dbReference>
<dbReference type="PROSITE" id="PS51195">
    <property type="entry name" value="Q_MOTIF"/>
    <property type="match status" value="1"/>
</dbReference>
<organism>
    <name type="scientific">Gibberella zeae (strain ATCC MYA-4620 / CBS 123657 / FGSC 9075 / NRRL 31084 / PH-1)</name>
    <name type="common">Wheat head blight fungus</name>
    <name type="synonym">Fusarium graminearum</name>
    <dbReference type="NCBI Taxonomy" id="229533"/>
    <lineage>
        <taxon>Eukaryota</taxon>
        <taxon>Fungi</taxon>
        <taxon>Dikarya</taxon>
        <taxon>Ascomycota</taxon>
        <taxon>Pezizomycotina</taxon>
        <taxon>Sordariomycetes</taxon>
        <taxon>Hypocreomycetidae</taxon>
        <taxon>Hypocreales</taxon>
        <taxon>Nectriaceae</taxon>
        <taxon>Fusarium</taxon>
    </lineage>
</organism>
<comment type="function">
    <text>ATP-dependent RNA helicase involved in 40S ribosomal subunit biogenesis. Required for the processing and cleavage of 35S pre-rRNA at sites A0, A1, and A2, leading to mature 18S rRNA.</text>
</comment>
<comment type="catalytic activity">
    <reaction>
        <text>ATP + H2O = ADP + phosphate + H(+)</text>
        <dbReference type="Rhea" id="RHEA:13065"/>
        <dbReference type="ChEBI" id="CHEBI:15377"/>
        <dbReference type="ChEBI" id="CHEBI:15378"/>
        <dbReference type="ChEBI" id="CHEBI:30616"/>
        <dbReference type="ChEBI" id="CHEBI:43474"/>
        <dbReference type="ChEBI" id="CHEBI:456216"/>
        <dbReference type="EC" id="3.6.4.13"/>
    </reaction>
</comment>
<comment type="subunit">
    <text evidence="1">Interacts with the U3 snoRNA and is associated with the 90S and 40S pre-ribosomes.</text>
</comment>
<comment type="subcellular location">
    <subcellularLocation>
        <location evidence="1">Nucleus</location>
        <location evidence="1">Nucleolus</location>
    </subcellularLocation>
</comment>
<comment type="domain">
    <text>The Q motif is unique to and characteristic of the DEAD box family of RNA helicases and controls ATP binding and hydrolysis.</text>
</comment>
<comment type="similarity">
    <text evidence="5">Belongs to the DEAD box helicase family. DDX52/ROK1 subfamily.</text>
</comment>
<proteinExistence type="inferred from homology"/>
<name>ROK1_GIBZE</name>
<gene>
    <name type="primary">ROK1</name>
    <name type="ORF">FGRRES_00877</name>
    <name type="ORF">FGSG_00877</name>
</gene>
<reference key="1">
    <citation type="journal article" date="2007" name="Science">
        <title>The Fusarium graminearum genome reveals a link between localized polymorphism and pathogen specialization.</title>
        <authorList>
            <person name="Cuomo C.A."/>
            <person name="Gueldener U."/>
            <person name="Xu J.-R."/>
            <person name="Trail F."/>
            <person name="Turgeon B.G."/>
            <person name="Di Pietro A."/>
            <person name="Walton J.D."/>
            <person name="Ma L.-J."/>
            <person name="Baker S.E."/>
            <person name="Rep M."/>
            <person name="Adam G."/>
            <person name="Antoniw J."/>
            <person name="Baldwin T."/>
            <person name="Calvo S.E."/>
            <person name="Chang Y.-L."/>
            <person name="DeCaprio D."/>
            <person name="Gale L.R."/>
            <person name="Gnerre S."/>
            <person name="Goswami R.S."/>
            <person name="Hammond-Kosack K."/>
            <person name="Harris L.J."/>
            <person name="Hilburn K."/>
            <person name="Kennell J.C."/>
            <person name="Kroken S."/>
            <person name="Magnuson J.K."/>
            <person name="Mannhaupt G."/>
            <person name="Mauceli E.W."/>
            <person name="Mewes H.-W."/>
            <person name="Mitterbauer R."/>
            <person name="Muehlbauer G."/>
            <person name="Muensterkoetter M."/>
            <person name="Nelson D."/>
            <person name="O'Donnell K."/>
            <person name="Ouellet T."/>
            <person name="Qi W."/>
            <person name="Quesneville H."/>
            <person name="Roncero M.I.G."/>
            <person name="Seong K.-Y."/>
            <person name="Tetko I.V."/>
            <person name="Urban M."/>
            <person name="Waalwijk C."/>
            <person name="Ward T.J."/>
            <person name="Yao J."/>
            <person name="Birren B.W."/>
            <person name="Kistler H.C."/>
        </authorList>
    </citation>
    <scope>NUCLEOTIDE SEQUENCE [LARGE SCALE GENOMIC DNA]</scope>
    <source>
        <strain>ATCC MYA-4620 / CBS 123657 / FGSC 9075 / NRRL 31084 / PH-1</strain>
    </source>
</reference>
<reference key="2">
    <citation type="journal article" date="2010" name="Nature">
        <title>Comparative genomics reveals mobile pathogenicity chromosomes in Fusarium.</title>
        <authorList>
            <person name="Ma L.-J."/>
            <person name="van der Does H.C."/>
            <person name="Borkovich K.A."/>
            <person name="Coleman J.J."/>
            <person name="Daboussi M.-J."/>
            <person name="Di Pietro A."/>
            <person name="Dufresne M."/>
            <person name="Freitag M."/>
            <person name="Grabherr M."/>
            <person name="Henrissat B."/>
            <person name="Houterman P.M."/>
            <person name="Kang S."/>
            <person name="Shim W.-B."/>
            <person name="Woloshuk C."/>
            <person name="Xie X."/>
            <person name="Xu J.-R."/>
            <person name="Antoniw J."/>
            <person name="Baker S.E."/>
            <person name="Bluhm B.H."/>
            <person name="Breakspear A."/>
            <person name="Brown D.W."/>
            <person name="Butchko R.A.E."/>
            <person name="Chapman S."/>
            <person name="Coulson R."/>
            <person name="Coutinho P.M."/>
            <person name="Danchin E.G.J."/>
            <person name="Diener A."/>
            <person name="Gale L.R."/>
            <person name="Gardiner D.M."/>
            <person name="Goff S."/>
            <person name="Hammond-Kosack K.E."/>
            <person name="Hilburn K."/>
            <person name="Hua-Van A."/>
            <person name="Jonkers W."/>
            <person name="Kazan K."/>
            <person name="Kodira C.D."/>
            <person name="Koehrsen M."/>
            <person name="Kumar L."/>
            <person name="Lee Y.-H."/>
            <person name="Li L."/>
            <person name="Manners J.M."/>
            <person name="Miranda-Saavedra D."/>
            <person name="Mukherjee M."/>
            <person name="Park G."/>
            <person name="Park J."/>
            <person name="Park S.-Y."/>
            <person name="Proctor R.H."/>
            <person name="Regev A."/>
            <person name="Ruiz-Roldan M.C."/>
            <person name="Sain D."/>
            <person name="Sakthikumar S."/>
            <person name="Sykes S."/>
            <person name="Schwartz D.C."/>
            <person name="Turgeon B.G."/>
            <person name="Wapinski I."/>
            <person name="Yoder O."/>
            <person name="Young S."/>
            <person name="Zeng Q."/>
            <person name="Zhou S."/>
            <person name="Galagan J."/>
            <person name="Cuomo C.A."/>
            <person name="Kistler H.C."/>
            <person name="Rep M."/>
        </authorList>
    </citation>
    <scope>GENOME REANNOTATION</scope>
    <source>
        <strain>ATCC MYA-4620 / CBS 123657 / FGSC 9075 / NRRL 31084 / PH-1</strain>
    </source>
</reference>
<reference key="3">
    <citation type="journal article" date="2015" name="BMC Genomics">
        <title>The completed genome sequence of the pathogenic ascomycete fungus Fusarium graminearum.</title>
        <authorList>
            <person name="King R."/>
            <person name="Urban M."/>
            <person name="Hammond-Kosack M.C.U."/>
            <person name="Hassani-Pak K."/>
            <person name="Hammond-Kosack K.E."/>
        </authorList>
    </citation>
    <scope>NUCLEOTIDE SEQUENCE [LARGE SCALE GENOMIC DNA]</scope>
    <source>
        <strain>ATCC MYA-4620 / CBS 123657 / FGSC 9075 / NRRL 31084 / PH-1</strain>
    </source>
</reference>
<sequence length="693" mass="76134">MDILKLLSRGTKKTQKGSQNAFNPQQKLPSAGTSTNPQLYHDQVRGHKRKRTKNESEPEAKVDLPEVDFFAPKPEPVAEAPVEVDEPVQAPKPTRSSRLLSEDECRQLLRSHRLKITLLSKTEDQSKVKKSKKKKKAAVEVKKDSKKQLFPQPLDSFGELRNAYGLSDKVADNLVFQGYRVPTEVQMGSLPLLVHPQAALKDEDGLDGGVDFLAIAPTGSGKTISFLIPAINNILRRRSEENTGNIHELEAVIVAPTRELVHQIVSEGQKLCKGTGLKVVSMKKHTHLSADQVDMAEDSSEDEEDKESESEDDDKKPSDDKPKQITTPDILVTTPFLLFKFLTSGPPSTQKVLPTVRDLILDEADVLLDPLFRDATMADWTACTNTNLRVSFWSATMGSNIESMVTEKLTSRAQSLDITPKPFVRLVVGLKDTAVPNIAHKLIYTASEQGKLLALRQLLHPTASDDSGPPLRPPFLVFTQTIDRATALHEELQYDIPLEAGGAARIAALHSGLTDSARSSIMRKFRAGDIWILITTDVLARGVDFAGVNGVVNYDVPGSSAGYVHRAGRTGRAGREGGIAVTFYTKEDIPFVKMVANVIAVSEKQAGKTGDEAGVQKWLLDALPNVRKADRKKLKERGNEARRSGVKSKISSKSGYERRRENNRLGAIEGSKKRKLQANDDSGDDGEWGGIDD</sequence>